<sequence length="324" mass="35460">MAKEIKKIAVLTSGGDAPGMNAAIRGVVRAALNEGLEIFGVQDGYYGLYHDKVIPLDRRSVSEIINRGGTFLGSARFPQFKDIEVRKQAVKILAKYEIDALVVIGGDGSYMGAKLLTEEFGYPCIGLPGTIDNDIVGTDYTIGYQTALQTAVEAIDRLRDTSTSHQRISIVEIMGRHCGDLTISAALAGGCEYIIVPEKGLDKESLIHSIADNFRKGKRHAIIAITELMTDVHQLARELEEKFGHETRATVLGHIQRGGSPCPFDRILASRMGVYAVDLLRQGFGGRCVGIQNEHLVHHDIIDAINNMRRPFKQDIFEAASKLA</sequence>
<comment type="function">
    <text evidence="1">Catalyzes the phosphorylation of D-fructose 6-phosphate to fructose 1,6-bisphosphate by ATP, the first committing step of glycolysis.</text>
</comment>
<comment type="catalytic activity">
    <reaction evidence="1">
        <text>beta-D-fructose 6-phosphate + ATP = beta-D-fructose 1,6-bisphosphate + ADP + H(+)</text>
        <dbReference type="Rhea" id="RHEA:16109"/>
        <dbReference type="ChEBI" id="CHEBI:15378"/>
        <dbReference type="ChEBI" id="CHEBI:30616"/>
        <dbReference type="ChEBI" id="CHEBI:32966"/>
        <dbReference type="ChEBI" id="CHEBI:57634"/>
        <dbReference type="ChEBI" id="CHEBI:456216"/>
        <dbReference type="EC" id="2.7.1.11"/>
    </reaction>
</comment>
<comment type="cofactor">
    <cofactor evidence="1">
        <name>Mg(2+)</name>
        <dbReference type="ChEBI" id="CHEBI:18420"/>
    </cofactor>
</comment>
<comment type="activity regulation">
    <text evidence="1">Allosterically activated by ADP and other diphosphonucleosides, and allosterically inhibited by phosphoenolpyruvate.</text>
</comment>
<comment type="pathway">
    <text evidence="1">Carbohydrate degradation; glycolysis; D-glyceraldehyde 3-phosphate and glycerone phosphate from D-glucose: step 3/4.</text>
</comment>
<comment type="subunit">
    <text evidence="1">Homotetramer.</text>
</comment>
<comment type="subcellular location">
    <subcellularLocation>
        <location evidence="1">Cytoplasm</location>
    </subcellularLocation>
</comment>
<comment type="similarity">
    <text evidence="1">Belongs to the phosphofructokinase type A (PFKA) family. ATP-dependent PFK group I subfamily. Prokaryotic clade 'B1' sub-subfamily.</text>
</comment>
<keyword id="KW-0021">Allosteric enzyme</keyword>
<keyword id="KW-0067">ATP-binding</keyword>
<keyword id="KW-0963">Cytoplasm</keyword>
<keyword id="KW-0324">Glycolysis</keyword>
<keyword id="KW-0418">Kinase</keyword>
<keyword id="KW-0460">Magnesium</keyword>
<keyword id="KW-0479">Metal-binding</keyword>
<keyword id="KW-0547">Nucleotide-binding</keyword>
<keyword id="KW-1185">Reference proteome</keyword>
<keyword id="KW-0808">Transferase</keyword>
<proteinExistence type="inferred from homology"/>
<dbReference type="EC" id="2.7.1.11" evidence="1"/>
<dbReference type="EMBL" id="AF536817">
    <property type="protein sequence ID" value="AAN05637.1"/>
    <property type="molecule type" value="Genomic_DNA"/>
</dbReference>
<dbReference type="EMBL" id="AE017143">
    <property type="protein sequence ID" value="AAP95425.1"/>
    <property type="molecule type" value="Genomic_DNA"/>
</dbReference>
<dbReference type="RefSeq" id="WP_010944478.1">
    <property type="nucleotide sequence ID" value="NC_002940.2"/>
</dbReference>
<dbReference type="SMR" id="Q8GNC1"/>
<dbReference type="STRING" id="233412.HD_0465"/>
<dbReference type="KEGG" id="hdu:HD_0465"/>
<dbReference type="eggNOG" id="COG0205">
    <property type="taxonomic scope" value="Bacteria"/>
</dbReference>
<dbReference type="HOGENOM" id="CLU_020655_0_1_6"/>
<dbReference type="OrthoDB" id="9802503at2"/>
<dbReference type="UniPathway" id="UPA00109">
    <property type="reaction ID" value="UER00182"/>
</dbReference>
<dbReference type="Proteomes" id="UP000001022">
    <property type="component" value="Chromosome"/>
</dbReference>
<dbReference type="GO" id="GO:0005945">
    <property type="term" value="C:6-phosphofructokinase complex"/>
    <property type="evidence" value="ECO:0007669"/>
    <property type="project" value="TreeGrafter"/>
</dbReference>
<dbReference type="GO" id="GO:0003872">
    <property type="term" value="F:6-phosphofructokinase activity"/>
    <property type="evidence" value="ECO:0007669"/>
    <property type="project" value="UniProtKB-UniRule"/>
</dbReference>
<dbReference type="GO" id="GO:0016208">
    <property type="term" value="F:AMP binding"/>
    <property type="evidence" value="ECO:0007669"/>
    <property type="project" value="TreeGrafter"/>
</dbReference>
<dbReference type="GO" id="GO:0005524">
    <property type="term" value="F:ATP binding"/>
    <property type="evidence" value="ECO:0007669"/>
    <property type="project" value="UniProtKB-KW"/>
</dbReference>
<dbReference type="GO" id="GO:0070095">
    <property type="term" value="F:fructose-6-phosphate binding"/>
    <property type="evidence" value="ECO:0007669"/>
    <property type="project" value="TreeGrafter"/>
</dbReference>
<dbReference type="GO" id="GO:0042802">
    <property type="term" value="F:identical protein binding"/>
    <property type="evidence" value="ECO:0007669"/>
    <property type="project" value="TreeGrafter"/>
</dbReference>
<dbReference type="GO" id="GO:0046872">
    <property type="term" value="F:metal ion binding"/>
    <property type="evidence" value="ECO:0007669"/>
    <property type="project" value="UniProtKB-KW"/>
</dbReference>
<dbReference type="GO" id="GO:0048029">
    <property type="term" value="F:monosaccharide binding"/>
    <property type="evidence" value="ECO:0007669"/>
    <property type="project" value="TreeGrafter"/>
</dbReference>
<dbReference type="GO" id="GO:0061621">
    <property type="term" value="P:canonical glycolysis"/>
    <property type="evidence" value="ECO:0007669"/>
    <property type="project" value="TreeGrafter"/>
</dbReference>
<dbReference type="GO" id="GO:0030388">
    <property type="term" value="P:fructose 1,6-bisphosphate metabolic process"/>
    <property type="evidence" value="ECO:0007669"/>
    <property type="project" value="TreeGrafter"/>
</dbReference>
<dbReference type="GO" id="GO:0006002">
    <property type="term" value="P:fructose 6-phosphate metabolic process"/>
    <property type="evidence" value="ECO:0007669"/>
    <property type="project" value="InterPro"/>
</dbReference>
<dbReference type="CDD" id="cd00763">
    <property type="entry name" value="Bacterial_PFK"/>
    <property type="match status" value="1"/>
</dbReference>
<dbReference type="FunFam" id="3.40.50.450:FF:000001">
    <property type="entry name" value="ATP-dependent 6-phosphofructokinase"/>
    <property type="match status" value="1"/>
</dbReference>
<dbReference type="FunFam" id="3.40.50.460:FF:000002">
    <property type="entry name" value="ATP-dependent 6-phosphofructokinase"/>
    <property type="match status" value="1"/>
</dbReference>
<dbReference type="Gene3D" id="3.40.50.450">
    <property type="match status" value="1"/>
</dbReference>
<dbReference type="Gene3D" id="3.40.50.460">
    <property type="entry name" value="Phosphofructokinase domain"/>
    <property type="match status" value="1"/>
</dbReference>
<dbReference type="HAMAP" id="MF_00339">
    <property type="entry name" value="Phosphofructokinase_I_B1"/>
    <property type="match status" value="1"/>
</dbReference>
<dbReference type="InterPro" id="IPR022953">
    <property type="entry name" value="ATP_PFK"/>
</dbReference>
<dbReference type="InterPro" id="IPR012003">
    <property type="entry name" value="ATP_PFK_prok-type"/>
</dbReference>
<dbReference type="InterPro" id="IPR012828">
    <property type="entry name" value="PFKA_ATP_prok"/>
</dbReference>
<dbReference type="InterPro" id="IPR015912">
    <property type="entry name" value="Phosphofructokinase_CS"/>
</dbReference>
<dbReference type="InterPro" id="IPR000023">
    <property type="entry name" value="Phosphofructokinase_dom"/>
</dbReference>
<dbReference type="InterPro" id="IPR035966">
    <property type="entry name" value="PKF_sf"/>
</dbReference>
<dbReference type="NCBIfam" id="TIGR02482">
    <property type="entry name" value="PFKA_ATP"/>
    <property type="match status" value="1"/>
</dbReference>
<dbReference type="NCBIfam" id="NF002872">
    <property type="entry name" value="PRK03202.1"/>
    <property type="match status" value="1"/>
</dbReference>
<dbReference type="PANTHER" id="PTHR13697:SF4">
    <property type="entry name" value="ATP-DEPENDENT 6-PHOSPHOFRUCTOKINASE"/>
    <property type="match status" value="1"/>
</dbReference>
<dbReference type="PANTHER" id="PTHR13697">
    <property type="entry name" value="PHOSPHOFRUCTOKINASE"/>
    <property type="match status" value="1"/>
</dbReference>
<dbReference type="Pfam" id="PF00365">
    <property type="entry name" value="PFK"/>
    <property type="match status" value="1"/>
</dbReference>
<dbReference type="PIRSF" id="PIRSF000532">
    <property type="entry name" value="ATP_PFK_prok"/>
    <property type="match status" value="1"/>
</dbReference>
<dbReference type="PRINTS" id="PR00476">
    <property type="entry name" value="PHFRCTKINASE"/>
</dbReference>
<dbReference type="SUPFAM" id="SSF53784">
    <property type="entry name" value="Phosphofructokinase"/>
    <property type="match status" value="1"/>
</dbReference>
<dbReference type="PROSITE" id="PS00433">
    <property type="entry name" value="PHOSPHOFRUCTOKINASE"/>
    <property type="match status" value="1"/>
</dbReference>
<protein>
    <recommendedName>
        <fullName evidence="1">ATP-dependent 6-phosphofructokinase</fullName>
        <shortName evidence="1">ATP-PFK</shortName>
        <shortName evidence="1">Phosphofructokinase</shortName>
        <ecNumber evidence="1">2.7.1.11</ecNumber>
    </recommendedName>
    <alternativeName>
        <fullName evidence="1">Phosphohexokinase</fullName>
    </alternativeName>
</protein>
<organism>
    <name type="scientific">Haemophilus ducreyi (strain 35000HP / ATCC 700724)</name>
    <dbReference type="NCBI Taxonomy" id="233412"/>
    <lineage>
        <taxon>Bacteria</taxon>
        <taxon>Pseudomonadati</taxon>
        <taxon>Pseudomonadota</taxon>
        <taxon>Gammaproteobacteria</taxon>
        <taxon>Pasteurellales</taxon>
        <taxon>Pasteurellaceae</taxon>
        <taxon>Haemophilus</taxon>
    </lineage>
</organism>
<evidence type="ECO:0000255" key="1">
    <source>
        <dbReference type="HAMAP-Rule" id="MF_00339"/>
    </source>
</evidence>
<name>PFKA_HAEDU</name>
<reference key="1">
    <citation type="journal article" date="2002" name="Infect. Immun.">
        <title>Identification and characterization of the N-acetylglucosamine glycosyltransferase gene of Haemophilus ducreyi.</title>
        <authorList>
            <person name="Sun S."/>
            <person name="Scheffler N.K."/>
            <person name="Gibson B.W."/>
            <person name="Wang J."/>
            <person name="Munson R.S. Jr."/>
        </authorList>
    </citation>
    <scope>NUCLEOTIDE SEQUENCE [GENOMIC DNA]</scope>
    <source>
        <strain>35000HP / ATCC 700724</strain>
    </source>
</reference>
<reference key="2">
    <citation type="submission" date="2003-06" db="EMBL/GenBank/DDBJ databases">
        <title>The complete genome sequence of Haemophilus ducreyi.</title>
        <authorList>
            <person name="Munson R.S. Jr."/>
            <person name="Ray W.C."/>
            <person name="Mahairas G."/>
            <person name="Sabo P."/>
            <person name="Mungur R."/>
            <person name="Johnson L."/>
            <person name="Nguyen D."/>
            <person name="Wang J."/>
            <person name="Forst C."/>
            <person name="Hood L."/>
        </authorList>
    </citation>
    <scope>NUCLEOTIDE SEQUENCE [LARGE SCALE GENOMIC DNA]</scope>
    <source>
        <strain>35000HP / ATCC 700724</strain>
    </source>
</reference>
<feature type="chain" id="PRO_0000111955" description="ATP-dependent 6-phosphofructokinase">
    <location>
        <begin position="1"/>
        <end position="324"/>
    </location>
</feature>
<feature type="active site" description="Proton acceptor" evidence="1">
    <location>
        <position position="132"/>
    </location>
</feature>
<feature type="binding site" evidence="1">
    <location>
        <position position="15"/>
    </location>
    <ligand>
        <name>ATP</name>
        <dbReference type="ChEBI" id="CHEBI:30616"/>
    </ligand>
</feature>
<feature type="binding site" evidence="1">
    <location>
        <begin position="25"/>
        <end position="29"/>
    </location>
    <ligand>
        <name>ADP</name>
        <dbReference type="ChEBI" id="CHEBI:456216"/>
        <note>allosteric activator; ligand shared between dimeric partners</note>
    </ligand>
</feature>
<feature type="binding site" evidence="1">
    <location>
        <begin position="76"/>
        <end position="77"/>
    </location>
    <ligand>
        <name>ATP</name>
        <dbReference type="ChEBI" id="CHEBI:30616"/>
    </ligand>
</feature>
<feature type="binding site" evidence="1">
    <location>
        <begin position="106"/>
        <end position="109"/>
    </location>
    <ligand>
        <name>ATP</name>
        <dbReference type="ChEBI" id="CHEBI:30616"/>
    </ligand>
</feature>
<feature type="binding site" evidence="1">
    <location>
        <position position="107"/>
    </location>
    <ligand>
        <name>Mg(2+)</name>
        <dbReference type="ChEBI" id="CHEBI:18420"/>
        <note>catalytic</note>
    </ligand>
</feature>
<feature type="binding site" description="in other chain" evidence="1">
    <location>
        <begin position="130"/>
        <end position="132"/>
    </location>
    <ligand>
        <name>substrate</name>
        <note>ligand shared between dimeric partners</note>
    </ligand>
</feature>
<feature type="binding site" description="in other chain" evidence="1">
    <location>
        <position position="159"/>
    </location>
    <ligand>
        <name>ADP</name>
        <dbReference type="ChEBI" id="CHEBI:456216"/>
        <note>allosteric activator; ligand shared between dimeric partners</note>
    </ligand>
</feature>
<feature type="binding site" evidence="1">
    <location>
        <position position="167"/>
    </location>
    <ligand>
        <name>substrate</name>
        <note>ligand shared between dimeric partners</note>
    </ligand>
</feature>
<feature type="binding site" description="in other chain" evidence="1">
    <location>
        <begin position="174"/>
        <end position="176"/>
    </location>
    <ligand>
        <name>substrate</name>
        <note>ligand shared between dimeric partners</note>
    </ligand>
</feature>
<feature type="binding site" description="in other chain" evidence="1">
    <location>
        <begin position="190"/>
        <end position="192"/>
    </location>
    <ligand>
        <name>ADP</name>
        <dbReference type="ChEBI" id="CHEBI:456216"/>
        <note>allosteric activator; ligand shared between dimeric partners</note>
    </ligand>
</feature>
<feature type="binding site" description="in other chain" evidence="1">
    <location>
        <position position="216"/>
    </location>
    <ligand>
        <name>ADP</name>
        <dbReference type="ChEBI" id="CHEBI:456216"/>
        <note>allosteric activator; ligand shared between dimeric partners</note>
    </ligand>
</feature>
<feature type="binding site" description="in other chain" evidence="1">
    <location>
        <begin position="218"/>
        <end position="220"/>
    </location>
    <ligand>
        <name>ADP</name>
        <dbReference type="ChEBI" id="CHEBI:456216"/>
        <note>allosteric activator; ligand shared between dimeric partners</note>
    </ligand>
</feature>
<feature type="binding site" description="in other chain" evidence="1">
    <location>
        <position position="227"/>
    </location>
    <ligand>
        <name>substrate</name>
        <note>ligand shared between dimeric partners</note>
    </ligand>
</feature>
<feature type="binding site" evidence="1">
    <location>
        <position position="248"/>
    </location>
    <ligand>
        <name>substrate</name>
        <note>ligand shared between dimeric partners</note>
    </ligand>
</feature>
<feature type="binding site" description="in other chain" evidence="1">
    <location>
        <begin position="254"/>
        <end position="257"/>
    </location>
    <ligand>
        <name>substrate</name>
        <note>ligand shared between dimeric partners</note>
    </ligand>
</feature>
<accession>Q8GNC1</accession>
<accession>Q7BY74</accession>
<gene>
    <name evidence="1" type="primary">pfkA</name>
    <name type="ordered locus">HD_0465</name>
</gene>